<evidence type="ECO:0000250" key="1"/>
<evidence type="ECO:0000269" key="2">
    <source>
    </source>
</evidence>
<evidence type="ECO:0000269" key="3">
    <source>
    </source>
</evidence>
<evidence type="ECO:0000303" key="4">
    <source>
    </source>
</evidence>
<evidence type="ECO:0000305" key="5"/>
<evidence type="ECO:0007829" key="6">
    <source>
        <dbReference type="PDB" id="7N2T"/>
    </source>
</evidence>
<accession>Q43317</accession>
<protein>
    <recommendedName>
        <fullName evidence="4">Cysteine synthase</fullName>
        <shortName>CSase</shortName>
        <ecNumber evidence="2 3">2.5.1.47</ecNumber>
    </recommendedName>
    <alternativeName>
        <fullName>Beta-PA/CSase</fullName>
        <ecNumber evidence="2 3">2.5.1.51</ecNumber>
    </alternativeName>
    <alternativeName>
        <fullName evidence="4">Beta-pyrazolylalanine synthase</fullName>
        <ecNumber evidence="2 3">4.2.1.50</ecNumber>
    </alternativeName>
    <alternativeName>
        <fullName>L-mimosine synthase</fullName>
        <ecNumber evidence="3">2.5.1.52</ecNumber>
    </alternativeName>
    <alternativeName>
        <fullName>O-acetylserine (thiol)-lyase</fullName>
        <shortName>OAS-TL</shortName>
    </alternativeName>
    <alternativeName>
        <fullName>O-acetylserine sulfhydrylase</fullName>
    </alternativeName>
</protein>
<proteinExistence type="evidence at protein level"/>
<keyword id="KW-0002">3D-structure</keyword>
<keyword id="KW-0028">Amino-acid biosynthesis</keyword>
<keyword id="KW-0198">Cysteine biosynthesis</keyword>
<keyword id="KW-0963">Cytoplasm</keyword>
<keyword id="KW-0456">Lyase</keyword>
<keyword id="KW-0663">Pyridoxal phosphate</keyword>
<keyword id="KW-0808">Transferase</keyword>
<sequence>MADAKSTIAKDVTELIGNTPLVYLNRVVDGCVARVAAKLEMMEPCSSVKDRIGYSMISDAENKGLITPGESVLIEPTSGNTGIGLAFIAAAKGYRLIICMPASMSLERRTILRAFGAELVLTDPARGMKGAVQKAEEIKAKTPNSYILQQFENPANPKIHYETTGPEIWRGSGGKIDALVSGIGTGGTVTGAGKYLKEQNPNIKLYGVEPVESAILSGGKPGPHKIQGIGAGFIPGVLDVNLLDEVIQVSSEESIETAKLLALKEGLLVGISSGAAAAAAIRIAKRPENAGKLIVAVFPSFGERYLSTVLFESVKRETENMVFEP</sequence>
<reference key="1">
    <citation type="journal article" date="1994" name="Mol. Gen. Genet.">
        <title>Molecular cloning of a cysteine synthase cDNA from Citrullus vulgaris (watermelon) by genetic complementation in an Escherichia coli Cys-auxotroph.</title>
        <authorList>
            <person name="Noji M."/>
            <person name="Murakoshi I."/>
            <person name="Saito K."/>
        </authorList>
    </citation>
    <scope>NUCLEOTIDE SEQUENCE [MRNA]</scope>
    <source>
        <tissue>Seedling</tissue>
    </source>
</reference>
<reference key="2">
    <citation type="journal article" date="1993" name="Biochem. Biophys. Res. Commun.">
        <title>Evidence for identity of beta-pyrazolealanine synthase with cysteine synthase in watermelon: formation of beta-pyrazole-alanine by cloned cysteine synthase in vitro and in vivo.</title>
        <authorList>
            <person name="Noji M."/>
            <person name="Murakoshi I."/>
            <person name="Saito K."/>
        </authorList>
    </citation>
    <scope>FUNCTION</scope>
    <scope>CATALYTIC ACTIVITY</scope>
</reference>
<reference key="3">
    <citation type="journal article" date="1997" name="Biol. Pharm. Bull.">
        <title>Production of plant non-protein amino acids by recombinant enzymes of sequential biosynthetic reactions in bacteria.</title>
        <authorList>
            <person name="Saito K."/>
            <person name="Kimura N."/>
            <person name="Ikegami F."/>
            <person name="Noji M."/>
        </authorList>
    </citation>
    <scope>FUNCTION</scope>
    <scope>CATALYTIC ACTIVITY</scope>
</reference>
<feature type="chain" id="PRO_0000167119" description="Cysteine synthase">
    <location>
        <begin position="1"/>
        <end position="325"/>
    </location>
</feature>
<feature type="binding site" evidence="1">
    <location>
        <position position="80"/>
    </location>
    <ligand>
        <name>pyridoxal 5'-phosphate</name>
        <dbReference type="ChEBI" id="CHEBI:597326"/>
    </ligand>
</feature>
<feature type="binding site" evidence="1">
    <location>
        <begin position="184"/>
        <end position="188"/>
    </location>
    <ligand>
        <name>pyridoxal 5'-phosphate</name>
        <dbReference type="ChEBI" id="CHEBI:597326"/>
    </ligand>
</feature>
<feature type="binding site" evidence="1">
    <location>
        <position position="272"/>
    </location>
    <ligand>
        <name>pyridoxal 5'-phosphate</name>
        <dbReference type="ChEBI" id="CHEBI:597326"/>
    </ligand>
</feature>
<feature type="modified residue" description="N6-(pyridoxal phosphate)lysine" evidence="1">
    <location>
        <position position="49"/>
    </location>
</feature>
<feature type="helix" evidence="6">
    <location>
        <begin position="12"/>
        <end position="15"/>
    </location>
</feature>
<feature type="strand" evidence="6">
    <location>
        <begin position="21"/>
        <end position="23"/>
    </location>
</feature>
<feature type="strand" evidence="6">
    <location>
        <begin position="32"/>
        <end position="39"/>
    </location>
</feature>
<feature type="helix" evidence="6">
    <location>
        <begin position="40"/>
        <end position="42"/>
    </location>
</feature>
<feature type="helix" evidence="6">
    <location>
        <begin position="51"/>
        <end position="62"/>
    </location>
</feature>
<feature type="turn" evidence="6">
    <location>
        <begin position="68"/>
        <end position="70"/>
    </location>
</feature>
<feature type="strand" evidence="6">
    <location>
        <begin position="72"/>
        <end position="76"/>
    </location>
</feature>
<feature type="helix" evidence="6">
    <location>
        <begin position="80"/>
        <end position="92"/>
    </location>
</feature>
<feature type="strand" evidence="6">
    <location>
        <begin position="95"/>
        <end position="101"/>
    </location>
</feature>
<feature type="helix" evidence="6">
    <location>
        <begin position="106"/>
        <end position="114"/>
    </location>
</feature>
<feature type="strand" evidence="6">
    <location>
        <begin position="118"/>
        <end position="122"/>
    </location>
</feature>
<feature type="helix" evidence="6">
    <location>
        <begin position="124"/>
        <end position="126"/>
    </location>
</feature>
<feature type="helix" evidence="6">
    <location>
        <begin position="127"/>
        <end position="141"/>
    </location>
</feature>
<feature type="strand" evidence="6">
    <location>
        <begin position="145"/>
        <end position="147"/>
    </location>
</feature>
<feature type="turn" evidence="6">
    <location>
        <begin position="150"/>
        <end position="152"/>
    </location>
</feature>
<feature type="helix" evidence="6">
    <location>
        <begin position="155"/>
        <end position="162"/>
    </location>
</feature>
<feature type="helix" evidence="6">
    <location>
        <begin position="164"/>
        <end position="171"/>
    </location>
</feature>
<feature type="turn" evidence="6">
    <location>
        <begin position="172"/>
        <end position="174"/>
    </location>
</feature>
<feature type="strand" evidence="6">
    <location>
        <begin position="176"/>
        <end position="182"/>
    </location>
</feature>
<feature type="strand" evidence="6">
    <location>
        <begin position="184"/>
        <end position="186"/>
    </location>
</feature>
<feature type="helix" evidence="6">
    <location>
        <begin position="187"/>
        <end position="199"/>
    </location>
</feature>
<feature type="strand" evidence="6">
    <location>
        <begin position="204"/>
        <end position="210"/>
    </location>
</feature>
<feature type="helix" evidence="6">
    <location>
        <begin position="211"/>
        <end position="213"/>
    </location>
</feature>
<feature type="helix" evidence="6">
    <location>
        <begin position="215"/>
        <end position="217"/>
    </location>
</feature>
<feature type="helix" evidence="6">
    <location>
        <begin position="240"/>
        <end position="242"/>
    </location>
</feature>
<feature type="strand" evidence="6">
    <location>
        <begin position="244"/>
        <end position="249"/>
    </location>
</feature>
<feature type="helix" evidence="6">
    <location>
        <begin position="251"/>
        <end position="265"/>
    </location>
</feature>
<feature type="helix" evidence="6">
    <location>
        <begin position="271"/>
        <end position="284"/>
    </location>
</feature>
<feature type="helix" evidence="6">
    <location>
        <begin position="287"/>
        <end position="289"/>
    </location>
</feature>
<feature type="strand" evidence="6">
    <location>
        <begin position="293"/>
        <end position="298"/>
    </location>
</feature>
<feature type="strand" evidence="6">
    <location>
        <begin position="300"/>
        <end position="302"/>
    </location>
</feature>
<feature type="helix" evidence="6">
    <location>
        <begin position="303"/>
        <end position="313"/>
    </location>
</feature>
<comment type="function">
    <text evidence="2 3">Produces L-cysteine from O-acetyl-L-serine and hydrogen sulfide. Can also use pyrazole and 3,4-dihydroxypyridine instead of the hydrogen sulfide to produce two plant specific non-protein amino acids beta-pyrazolylalanine and L-mimosine.</text>
</comment>
<comment type="catalytic activity">
    <reaction evidence="2 3">
        <text>O-acetyl-L-serine + hydrogen sulfide = L-cysteine + acetate</text>
        <dbReference type="Rhea" id="RHEA:14829"/>
        <dbReference type="ChEBI" id="CHEBI:29919"/>
        <dbReference type="ChEBI" id="CHEBI:30089"/>
        <dbReference type="ChEBI" id="CHEBI:35235"/>
        <dbReference type="ChEBI" id="CHEBI:58340"/>
        <dbReference type="EC" id="2.5.1.47"/>
    </reaction>
</comment>
<comment type="catalytic activity">
    <reaction evidence="2 3">
        <text>pyrazole + O-acetyl-L-serine = 3-(pyrazol-1-yl)-L-alanine + acetate + H(+)</text>
        <dbReference type="Rhea" id="RHEA:13117"/>
        <dbReference type="ChEBI" id="CHEBI:15378"/>
        <dbReference type="ChEBI" id="CHEBI:17241"/>
        <dbReference type="ChEBI" id="CHEBI:30089"/>
        <dbReference type="ChEBI" id="CHEBI:57747"/>
        <dbReference type="ChEBI" id="CHEBI:58340"/>
        <dbReference type="EC" id="2.5.1.51"/>
    </reaction>
</comment>
<comment type="catalytic activity">
    <reaction evidence="2 3">
        <text>pyrazole + L-serine = 3-(pyrazol-1-yl)-L-alanine + H2O</text>
        <dbReference type="Rhea" id="RHEA:24512"/>
        <dbReference type="ChEBI" id="CHEBI:15377"/>
        <dbReference type="ChEBI" id="CHEBI:17241"/>
        <dbReference type="ChEBI" id="CHEBI:33384"/>
        <dbReference type="ChEBI" id="CHEBI:57747"/>
        <dbReference type="EC" id="4.2.1.50"/>
    </reaction>
</comment>
<comment type="catalytic activity">
    <reaction evidence="3">
        <text>3,4-dihydroxypyridine + O-acetyl-L-serine = 3-(3,4-dihydroxypyridin-1-yl)-L-alanine + acetate + H(+)</text>
        <dbReference type="Rhea" id="RHEA:12693"/>
        <dbReference type="ChEBI" id="CHEBI:15378"/>
        <dbReference type="ChEBI" id="CHEBI:29053"/>
        <dbReference type="ChEBI" id="CHEBI:30089"/>
        <dbReference type="ChEBI" id="CHEBI:58340"/>
        <dbReference type="ChEBI" id="CHEBI:77848"/>
        <dbReference type="EC" id="2.5.1.52"/>
    </reaction>
</comment>
<comment type="cofactor">
    <cofactor>
        <name>pyridoxal 5'-phosphate</name>
        <dbReference type="ChEBI" id="CHEBI:597326"/>
    </cofactor>
</comment>
<comment type="pathway">
    <text>Amino-acid biosynthesis; L-cysteine biosynthesis; L-cysteine from L-serine: step 2/2.</text>
</comment>
<comment type="subunit">
    <text evidence="1">Homodimer.</text>
</comment>
<comment type="subcellular location">
    <subcellularLocation>
        <location evidence="1">Cytoplasm</location>
    </subcellularLocation>
</comment>
<comment type="similarity">
    <text evidence="5">Belongs to the cysteine synthase/cystathionine beta-synthase family.</text>
</comment>
<dbReference type="EC" id="2.5.1.47" evidence="2 3"/>
<dbReference type="EC" id="2.5.1.51" evidence="2 3"/>
<dbReference type="EC" id="4.2.1.50" evidence="2 3"/>
<dbReference type="EC" id="2.5.1.52" evidence="3"/>
<dbReference type="EMBL" id="D28777">
    <property type="protein sequence ID" value="BAA05965.1"/>
    <property type="molecule type" value="mRNA"/>
</dbReference>
<dbReference type="PIR" id="S46438">
    <property type="entry name" value="S46438"/>
</dbReference>
<dbReference type="PDB" id="7N2T">
    <property type="method" value="X-ray"/>
    <property type="resolution" value="1.55 A"/>
    <property type="chains" value="A=1-325"/>
</dbReference>
<dbReference type="PDBsum" id="7N2T"/>
<dbReference type="SMR" id="Q43317"/>
<dbReference type="EnsemblPlants" id="Cla97C02G042210.1">
    <property type="protein sequence ID" value="Cla97C02G042210.1"/>
    <property type="gene ID" value="Cla97C02G042210"/>
</dbReference>
<dbReference type="Gramene" id="Cla97C02G042210.1">
    <property type="protein sequence ID" value="Cla97C02G042210.1"/>
    <property type="gene ID" value="Cla97C02G042210"/>
</dbReference>
<dbReference type="KEGG" id="ag:BAA05965"/>
<dbReference type="UniPathway" id="UPA00136">
    <property type="reaction ID" value="UER00200"/>
</dbReference>
<dbReference type="GO" id="GO:0005737">
    <property type="term" value="C:cytoplasm"/>
    <property type="evidence" value="ECO:0007669"/>
    <property type="project" value="UniProtKB-SubCell"/>
</dbReference>
<dbReference type="GO" id="GO:0047458">
    <property type="term" value="F:beta-pyrazolylalanine synthase activity"/>
    <property type="evidence" value="ECO:0007669"/>
    <property type="project" value="UniProtKB-EC"/>
</dbReference>
<dbReference type="GO" id="GO:0004124">
    <property type="term" value="F:cysteine synthase activity"/>
    <property type="evidence" value="ECO:0007669"/>
    <property type="project" value="UniProtKB-EC"/>
</dbReference>
<dbReference type="GO" id="GO:0050461">
    <property type="term" value="F:L-mimosine synthase activity"/>
    <property type="evidence" value="ECO:0007669"/>
    <property type="project" value="UniProtKB-EC"/>
</dbReference>
<dbReference type="GO" id="GO:0050234">
    <property type="term" value="F:pyrazolylalanine synthase activity"/>
    <property type="evidence" value="ECO:0007669"/>
    <property type="project" value="UniProtKB-EC"/>
</dbReference>
<dbReference type="GO" id="GO:0006535">
    <property type="term" value="P:cysteine biosynthetic process from serine"/>
    <property type="evidence" value="ECO:0007669"/>
    <property type="project" value="InterPro"/>
</dbReference>
<dbReference type="CDD" id="cd01561">
    <property type="entry name" value="CBS_like"/>
    <property type="match status" value="1"/>
</dbReference>
<dbReference type="FunFam" id="3.40.50.1100:FF:000006">
    <property type="entry name" value="Cysteine synthase"/>
    <property type="match status" value="1"/>
</dbReference>
<dbReference type="FunFam" id="3.40.50.1100:FF:000130">
    <property type="entry name" value="Cysteine synthase"/>
    <property type="match status" value="1"/>
</dbReference>
<dbReference type="Gene3D" id="3.40.50.1100">
    <property type="match status" value="2"/>
</dbReference>
<dbReference type="InterPro" id="IPR005856">
    <property type="entry name" value="Cys_synth"/>
</dbReference>
<dbReference type="InterPro" id="IPR050214">
    <property type="entry name" value="Cys_Synth/Cystath_Beta-Synth"/>
</dbReference>
<dbReference type="InterPro" id="IPR005859">
    <property type="entry name" value="CysK"/>
</dbReference>
<dbReference type="InterPro" id="IPR001216">
    <property type="entry name" value="P-phosphate_BS"/>
</dbReference>
<dbReference type="InterPro" id="IPR001926">
    <property type="entry name" value="TrpB-like_PALP"/>
</dbReference>
<dbReference type="InterPro" id="IPR036052">
    <property type="entry name" value="TrpB-like_PALP_sf"/>
</dbReference>
<dbReference type="NCBIfam" id="TIGR01139">
    <property type="entry name" value="cysK"/>
    <property type="match status" value="1"/>
</dbReference>
<dbReference type="NCBIfam" id="TIGR01136">
    <property type="entry name" value="cysKM"/>
    <property type="match status" value="1"/>
</dbReference>
<dbReference type="PANTHER" id="PTHR10314">
    <property type="entry name" value="CYSTATHIONINE BETA-SYNTHASE"/>
    <property type="match status" value="1"/>
</dbReference>
<dbReference type="Pfam" id="PF00291">
    <property type="entry name" value="PALP"/>
    <property type="match status" value="1"/>
</dbReference>
<dbReference type="SUPFAM" id="SSF53686">
    <property type="entry name" value="Tryptophan synthase beta subunit-like PLP-dependent enzymes"/>
    <property type="match status" value="1"/>
</dbReference>
<dbReference type="PROSITE" id="PS00901">
    <property type="entry name" value="CYS_SYNTHASE"/>
    <property type="match status" value="1"/>
</dbReference>
<name>CYSK_CITLA</name>
<organism>
    <name type="scientific">Citrullus lanatus</name>
    <name type="common">Watermelon</name>
    <name type="synonym">Citrullus vulgaris</name>
    <dbReference type="NCBI Taxonomy" id="3654"/>
    <lineage>
        <taxon>Eukaryota</taxon>
        <taxon>Viridiplantae</taxon>
        <taxon>Streptophyta</taxon>
        <taxon>Embryophyta</taxon>
        <taxon>Tracheophyta</taxon>
        <taxon>Spermatophyta</taxon>
        <taxon>Magnoliopsida</taxon>
        <taxon>eudicotyledons</taxon>
        <taxon>Gunneridae</taxon>
        <taxon>Pentapetalae</taxon>
        <taxon>rosids</taxon>
        <taxon>fabids</taxon>
        <taxon>Cucurbitales</taxon>
        <taxon>Cucurbitaceae</taxon>
        <taxon>Benincaseae</taxon>
        <taxon>Citrullus</taxon>
    </lineage>
</organism>